<proteinExistence type="inferred from homology"/>
<comment type="function">
    <text evidence="1">Catalyzes the sequential NAD-dependent oxidations of L-histidinol to L-histidinaldehyde and then to L-histidine.</text>
</comment>
<comment type="catalytic activity">
    <reaction evidence="1">
        <text>L-histidinol + 2 NAD(+) + H2O = L-histidine + 2 NADH + 3 H(+)</text>
        <dbReference type="Rhea" id="RHEA:20641"/>
        <dbReference type="ChEBI" id="CHEBI:15377"/>
        <dbReference type="ChEBI" id="CHEBI:15378"/>
        <dbReference type="ChEBI" id="CHEBI:57540"/>
        <dbReference type="ChEBI" id="CHEBI:57595"/>
        <dbReference type="ChEBI" id="CHEBI:57699"/>
        <dbReference type="ChEBI" id="CHEBI:57945"/>
        <dbReference type="EC" id="1.1.1.23"/>
    </reaction>
</comment>
<comment type="cofactor">
    <cofactor evidence="1">
        <name>Zn(2+)</name>
        <dbReference type="ChEBI" id="CHEBI:29105"/>
    </cofactor>
    <text evidence="1">Binds 1 zinc ion per subunit.</text>
</comment>
<comment type="pathway">
    <text evidence="1">Amino-acid biosynthesis; L-histidine biosynthesis; L-histidine from 5-phospho-alpha-D-ribose 1-diphosphate: step 9/9.</text>
</comment>
<comment type="similarity">
    <text evidence="1">Belongs to the histidinol dehydrogenase family.</text>
</comment>
<gene>
    <name evidence="1" type="primary">hisD</name>
    <name type="ordered locus">Suden_0497</name>
</gene>
<protein>
    <recommendedName>
        <fullName evidence="1">Histidinol dehydrogenase</fullName>
        <shortName evidence="1">HDH</shortName>
        <ecNumber evidence="1">1.1.1.23</ecNumber>
    </recommendedName>
</protein>
<evidence type="ECO:0000255" key="1">
    <source>
        <dbReference type="HAMAP-Rule" id="MF_01024"/>
    </source>
</evidence>
<accession>Q30TA4</accession>
<name>HISX_SULDN</name>
<sequence>MIFTTSKNSSFKAEFKELLERGKMDIAHVSATVGTIIDEIKSNKNQALKEHITKFDKWTPVSDEDLKISTESMSRAYENLDKALKAALHLSYDRIKAYHEKQKPRSWFDDEPNGTILGQRVTPVDSAGLYIPGGKAAYPSSLLMNVIPAQVAGVQNIVVCTPTPENEPNELLLAACHLCGVSEVYKVGGASAIAAMAYGTETIPKVDVITGPGNIFVATAKKMVFGDVNIDMIAGPSEIGILADDSANPSHMAVDMLSQAEHDEMASSILITPSQKLADAIKAEIENWLKILPRQKIARESIEKRGAIIVTSDMQEAIDLMNEIAPEHLEVATLSPFELLPLIKHAGAIFLGHNTPEAVGDYMAGPNHTLPTGGTAKFFSPLGVENFMKKTSIISFSAKAINEIGEECALIAKIEGLTAHEQSIRVRLVK</sequence>
<dbReference type="EC" id="1.1.1.23" evidence="1"/>
<dbReference type="EMBL" id="CP000153">
    <property type="protein sequence ID" value="ABB43777.1"/>
    <property type="molecule type" value="Genomic_DNA"/>
</dbReference>
<dbReference type="RefSeq" id="WP_011372131.1">
    <property type="nucleotide sequence ID" value="NC_007575.1"/>
</dbReference>
<dbReference type="SMR" id="Q30TA4"/>
<dbReference type="STRING" id="326298.Suden_0497"/>
<dbReference type="KEGG" id="tdn:Suden_0497"/>
<dbReference type="eggNOG" id="COG0141">
    <property type="taxonomic scope" value="Bacteria"/>
</dbReference>
<dbReference type="HOGENOM" id="CLU_006732_3_3_7"/>
<dbReference type="OrthoDB" id="9805269at2"/>
<dbReference type="UniPathway" id="UPA00031">
    <property type="reaction ID" value="UER00014"/>
</dbReference>
<dbReference type="Proteomes" id="UP000002714">
    <property type="component" value="Chromosome"/>
</dbReference>
<dbReference type="GO" id="GO:0005829">
    <property type="term" value="C:cytosol"/>
    <property type="evidence" value="ECO:0007669"/>
    <property type="project" value="TreeGrafter"/>
</dbReference>
<dbReference type="GO" id="GO:0004399">
    <property type="term" value="F:histidinol dehydrogenase activity"/>
    <property type="evidence" value="ECO:0007669"/>
    <property type="project" value="UniProtKB-UniRule"/>
</dbReference>
<dbReference type="GO" id="GO:0051287">
    <property type="term" value="F:NAD binding"/>
    <property type="evidence" value="ECO:0007669"/>
    <property type="project" value="InterPro"/>
</dbReference>
<dbReference type="GO" id="GO:0008270">
    <property type="term" value="F:zinc ion binding"/>
    <property type="evidence" value="ECO:0007669"/>
    <property type="project" value="UniProtKB-UniRule"/>
</dbReference>
<dbReference type="GO" id="GO:0000105">
    <property type="term" value="P:L-histidine biosynthetic process"/>
    <property type="evidence" value="ECO:0007669"/>
    <property type="project" value="UniProtKB-UniRule"/>
</dbReference>
<dbReference type="CDD" id="cd06572">
    <property type="entry name" value="Histidinol_dh"/>
    <property type="match status" value="1"/>
</dbReference>
<dbReference type="FunFam" id="3.40.50.1980:FF:000001">
    <property type="entry name" value="Histidinol dehydrogenase"/>
    <property type="match status" value="1"/>
</dbReference>
<dbReference type="FunFam" id="3.40.50.1980:FF:000026">
    <property type="entry name" value="Histidinol dehydrogenase"/>
    <property type="match status" value="1"/>
</dbReference>
<dbReference type="Gene3D" id="1.20.5.1300">
    <property type="match status" value="1"/>
</dbReference>
<dbReference type="Gene3D" id="3.40.50.1980">
    <property type="entry name" value="Nitrogenase molybdenum iron protein domain"/>
    <property type="match status" value="2"/>
</dbReference>
<dbReference type="HAMAP" id="MF_01024">
    <property type="entry name" value="HisD"/>
    <property type="match status" value="1"/>
</dbReference>
<dbReference type="InterPro" id="IPR016161">
    <property type="entry name" value="Ald_DH/histidinol_DH"/>
</dbReference>
<dbReference type="InterPro" id="IPR001692">
    <property type="entry name" value="Histidinol_DH_CS"/>
</dbReference>
<dbReference type="InterPro" id="IPR022695">
    <property type="entry name" value="Histidinol_DH_monofunct"/>
</dbReference>
<dbReference type="InterPro" id="IPR012131">
    <property type="entry name" value="Hstdl_DH"/>
</dbReference>
<dbReference type="NCBIfam" id="TIGR00069">
    <property type="entry name" value="hisD"/>
    <property type="match status" value="1"/>
</dbReference>
<dbReference type="PANTHER" id="PTHR21256:SF2">
    <property type="entry name" value="HISTIDINE BIOSYNTHESIS TRIFUNCTIONAL PROTEIN"/>
    <property type="match status" value="1"/>
</dbReference>
<dbReference type="PANTHER" id="PTHR21256">
    <property type="entry name" value="HISTIDINOL DEHYDROGENASE HDH"/>
    <property type="match status" value="1"/>
</dbReference>
<dbReference type="Pfam" id="PF00815">
    <property type="entry name" value="Histidinol_dh"/>
    <property type="match status" value="1"/>
</dbReference>
<dbReference type="PIRSF" id="PIRSF000099">
    <property type="entry name" value="Histidinol_dh"/>
    <property type="match status" value="1"/>
</dbReference>
<dbReference type="PRINTS" id="PR00083">
    <property type="entry name" value="HOLDHDRGNASE"/>
</dbReference>
<dbReference type="SUPFAM" id="SSF53720">
    <property type="entry name" value="ALDH-like"/>
    <property type="match status" value="1"/>
</dbReference>
<dbReference type="PROSITE" id="PS00611">
    <property type="entry name" value="HISOL_DEHYDROGENASE"/>
    <property type="match status" value="1"/>
</dbReference>
<reference key="1">
    <citation type="journal article" date="2008" name="Appl. Environ. Microbiol.">
        <title>Genome of the epsilonproteobacterial chemolithoautotroph Sulfurimonas denitrificans.</title>
        <authorList>
            <person name="Sievert S.M."/>
            <person name="Scott K.M."/>
            <person name="Klotz M.G."/>
            <person name="Chain P.S.G."/>
            <person name="Hauser L.J."/>
            <person name="Hemp J."/>
            <person name="Huegler M."/>
            <person name="Land M."/>
            <person name="Lapidus A."/>
            <person name="Larimer F.W."/>
            <person name="Lucas S."/>
            <person name="Malfatti S.A."/>
            <person name="Meyer F."/>
            <person name="Paulsen I.T."/>
            <person name="Ren Q."/>
            <person name="Simon J."/>
            <person name="Bailey K."/>
            <person name="Diaz E."/>
            <person name="Fitzpatrick K.A."/>
            <person name="Glover B."/>
            <person name="Gwatney N."/>
            <person name="Korajkic A."/>
            <person name="Long A."/>
            <person name="Mobberley J.M."/>
            <person name="Pantry S.N."/>
            <person name="Pazder G."/>
            <person name="Peterson S."/>
            <person name="Quintanilla J.D."/>
            <person name="Sprinkle R."/>
            <person name="Stephens J."/>
            <person name="Thomas P."/>
            <person name="Vaughn R."/>
            <person name="Weber M.J."/>
            <person name="Wooten L.L."/>
        </authorList>
    </citation>
    <scope>NUCLEOTIDE SEQUENCE [LARGE SCALE GENOMIC DNA]</scope>
    <source>
        <strain>ATCC 33889 / DSM 1251</strain>
    </source>
</reference>
<organism>
    <name type="scientific">Sulfurimonas denitrificans (strain ATCC 33889 / DSM 1251)</name>
    <name type="common">Thiomicrospira denitrificans (strain ATCC 33889 / DSM 1251)</name>
    <dbReference type="NCBI Taxonomy" id="326298"/>
    <lineage>
        <taxon>Bacteria</taxon>
        <taxon>Pseudomonadati</taxon>
        <taxon>Campylobacterota</taxon>
        <taxon>Epsilonproteobacteria</taxon>
        <taxon>Campylobacterales</taxon>
        <taxon>Sulfurimonadaceae</taxon>
        <taxon>Sulfurimonas</taxon>
    </lineage>
</organism>
<keyword id="KW-0028">Amino-acid biosynthesis</keyword>
<keyword id="KW-0368">Histidine biosynthesis</keyword>
<keyword id="KW-0479">Metal-binding</keyword>
<keyword id="KW-0520">NAD</keyword>
<keyword id="KW-0560">Oxidoreductase</keyword>
<keyword id="KW-1185">Reference proteome</keyword>
<keyword id="KW-0862">Zinc</keyword>
<feature type="chain" id="PRO_0000229868" description="Histidinol dehydrogenase">
    <location>
        <begin position="1"/>
        <end position="430"/>
    </location>
</feature>
<feature type="active site" description="Proton acceptor" evidence="1">
    <location>
        <position position="327"/>
    </location>
</feature>
<feature type="active site" description="Proton acceptor" evidence="1">
    <location>
        <position position="328"/>
    </location>
</feature>
<feature type="binding site" evidence="1">
    <location>
        <position position="237"/>
    </location>
    <ligand>
        <name>substrate</name>
    </ligand>
</feature>
<feature type="binding site" evidence="1">
    <location>
        <position position="259"/>
    </location>
    <ligand>
        <name>substrate</name>
    </ligand>
</feature>
<feature type="binding site" evidence="1">
    <location>
        <position position="259"/>
    </location>
    <ligand>
        <name>Zn(2+)</name>
        <dbReference type="ChEBI" id="CHEBI:29105"/>
    </ligand>
</feature>
<feature type="binding site" evidence="1">
    <location>
        <position position="262"/>
    </location>
    <ligand>
        <name>substrate</name>
    </ligand>
</feature>
<feature type="binding site" evidence="1">
    <location>
        <position position="262"/>
    </location>
    <ligand>
        <name>Zn(2+)</name>
        <dbReference type="ChEBI" id="CHEBI:29105"/>
    </ligand>
</feature>
<feature type="binding site" evidence="1">
    <location>
        <position position="328"/>
    </location>
    <ligand>
        <name>substrate</name>
    </ligand>
</feature>
<feature type="binding site" evidence="1">
    <location>
        <position position="361"/>
    </location>
    <ligand>
        <name>substrate</name>
    </ligand>
</feature>
<feature type="binding site" evidence="1">
    <location>
        <position position="361"/>
    </location>
    <ligand>
        <name>Zn(2+)</name>
        <dbReference type="ChEBI" id="CHEBI:29105"/>
    </ligand>
</feature>
<feature type="binding site" evidence="1">
    <location>
        <position position="415"/>
    </location>
    <ligand>
        <name>substrate</name>
    </ligand>
</feature>
<feature type="binding site" evidence="1">
    <location>
        <position position="420"/>
    </location>
    <ligand>
        <name>substrate</name>
    </ligand>
</feature>
<feature type="binding site" evidence="1">
    <location>
        <position position="420"/>
    </location>
    <ligand>
        <name>Zn(2+)</name>
        <dbReference type="ChEBI" id="CHEBI:29105"/>
    </ligand>
</feature>